<comment type="function">
    <text evidence="1">Involved in the binding of tRNA to the ribosomes.</text>
</comment>
<comment type="subunit">
    <text evidence="1">Part of the 30S ribosomal subunit.</text>
</comment>
<comment type="similarity">
    <text evidence="1">Belongs to the universal ribosomal protein uS10 family.</text>
</comment>
<sequence length="102" mass="11777">MAKQKIRIRLKAYEHRILDQSADKIVETAKRTGAQISGPIPLPTERTIYTVIRSPHKFKKSREQFEMRTHKRLIDIVDPTPKTVDSLMKLDLPSGVDIEIKL</sequence>
<proteinExistence type="inferred from homology"/>
<keyword id="KW-1185">Reference proteome</keyword>
<keyword id="KW-0687">Ribonucleoprotein</keyword>
<keyword id="KW-0689">Ribosomal protein</keyword>
<evidence type="ECO:0000255" key="1">
    <source>
        <dbReference type="HAMAP-Rule" id="MF_00508"/>
    </source>
</evidence>
<evidence type="ECO:0000305" key="2"/>
<dbReference type="EMBL" id="CP000705">
    <property type="protein sequence ID" value="ABQ83730.1"/>
    <property type="molecule type" value="Genomic_DNA"/>
</dbReference>
<dbReference type="RefSeq" id="WP_003664569.1">
    <property type="nucleotide sequence ID" value="NZ_AZDD01000010.1"/>
</dbReference>
<dbReference type="SMR" id="A5VLK6"/>
<dbReference type="STRING" id="557436.Lreu_1484"/>
<dbReference type="GeneID" id="77191480"/>
<dbReference type="KEGG" id="lre:Lreu_1484"/>
<dbReference type="PATRIC" id="fig|557436.17.peg.139"/>
<dbReference type="eggNOG" id="COG0051">
    <property type="taxonomic scope" value="Bacteria"/>
</dbReference>
<dbReference type="HOGENOM" id="CLU_122625_1_3_9"/>
<dbReference type="Proteomes" id="UP000001991">
    <property type="component" value="Chromosome"/>
</dbReference>
<dbReference type="GO" id="GO:1990904">
    <property type="term" value="C:ribonucleoprotein complex"/>
    <property type="evidence" value="ECO:0007669"/>
    <property type="project" value="UniProtKB-KW"/>
</dbReference>
<dbReference type="GO" id="GO:0005840">
    <property type="term" value="C:ribosome"/>
    <property type="evidence" value="ECO:0007669"/>
    <property type="project" value="UniProtKB-KW"/>
</dbReference>
<dbReference type="GO" id="GO:0003735">
    <property type="term" value="F:structural constituent of ribosome"/>
    <property type="evidence" value="ECO:0007669"/>
    <property type="project" value="InterPro"/>
</dbReference>
<dbReference type="GO" id="GO:0000049">
    <property type="term" value="F:tRNA binding"/>
    <property type="evidence" value="ECO:0007669"/>
    <property type="project" value="UniProtKB-UniRule"/>
</dbReference>
<dbReference type="GO" id="GO:0006412">
    <property type="term" value="P:translation"/>
    <property type="evidence" value="ECO:0007669"/>
    <property type="project" value="UniProtKB-UniRule"/>
</dbReference>
<dbReference type="FunFam" id="3.30.70.600:FF:000001">
    <property type="entry name" value="30S ribosomal protein S10"/>
    <property type="match status" value="1"/>
</dbReference>
<dbReference type="Gene3D" id="3.30.70.600">
    <property type="entry name" value="Ribosomal protein S10 domain"/>
    <property type="match status" value="1"/>
</dbReference>
<dbReference type="HAMAP" id="MF_00508">
    <property type="entry name" value="Ribosomal_uS10"/>
    <property type="match status" value="1"/>
</dbReference>
<dbReference type="InterPro" id="IPR001848">
    <property type="entry name" value="Ribosomal_uS10"/>
</dbReference>
<dbReference type="InterPro" id="IPR018268">
    <property type="entry name" value="Ribosomal_uS10_CS"/>
</dbReference>
<dbReference type="InterPro" id="IPR027486">
    <property type="entry name" value="Ribosomal_uS10_dom"/>
</dbReference>
<dbReference type="InterPro" id="IPR036838">
    <property type="entry name" value="Ribosomal_uS10_dom_sf"/>
</dbReference>
<dbReference type="NCBIfam" id="NF001861">
    <property type="entry name" value="PRK00596.1"/>
    <property type="match status" value="1"/>
</dbReference>
<dbReference type="NCBIfam" id="TIGR01049">
    <property type="entry name" value="rpsJ_bact"/>
    <property type="match status" value="1"/>
</dbReference>
<dbReference type="PANTHER" id="PTHR11700">
    <property type="entry name" value="30S RIBOSOMAL PROTEIN S10 FAMILY MEMBER"/>
    <property type="match status" value="1"/>
</dbReference>
<dbReference type="Pfam" id="PF00338">
    <property type="entry name" value="Ribosomal_S10"/>
    <property type="match status" value="1"/>
</dbReference>
<dbReference type="PRINTS" id="PR00971">
    <property type="entry name" value="RIBOSOMALS10"/>
</dbReference>
<dbReference type="SMART" id="SM01403">
    <property type="entry name" value="Ribosomal_S10"/>
    <property type="match status" value="1"/>
</dbReference>
<dbReference type="SUPFAM" id="SSF54999">
    <property type="entry name" value="Ribosomal protein S10"/>
    <property type="match status" value="1"/>
</dbReference>
<dbReference type="PROSITE" id="PS00361">
    <property type="entry name" value="RIBOSOMAL_S10"/>
    <property type="match status" value="1"/>
</dbReference>
<reference key="1">
    <citation type="journal article" date="2011" name="PLoS Genet.">
        <title>The evolution of host specialization in the vertebrate gut symbiont Lactobacillus reuteri.</title>
        <authorList>
            <person name="Frese S.A."/>
            <person name="Benson A.K."/>
            <person name="Tannock G.W."/>
            <person name="Loach D.M."/>
            <person name="Kim J."/>
            <person name="Zhang M."/>
            <person name="Oh P.L."/>
            <person name="Heng N.C."/>
            <person name="Patil P.B."/>
            <person name="Juge N."/>
            <person name="Mackenzie D.A."/>
            <person name="Pearson B.M."/>
            <person name="Lapidus A."/>
            <person name="Dalin E."/>
            <person name="Tice H."/>
            <person name="Goltsman E."/>
            <person name="Land M."/>
            <person name="Hauser L."/>
            <person name="Ivanova N."/>
            <person name="Kyrpides N.C."/>
            <person name="Walter J."/>
        </authorList>
    </citation>
    <scope>NUCLEOTIDE SEQUENCE [LARGE SCALE GENOMIC DNA]</scope>
    <source>
        <strain>DSM 20016</strain>
    </source>
</reference>
<organism>
    <name type="scientific">Limosilactobacillus reuteri (strain DSM 20016)</name>
    <name type="common">Lactobacillus reuteri</name>
    <dbReference type="NCBI Taxonomy" id="557436"/>
    <lineage>
        <taxon>Bacteria</taxon>
        <taxon>Bacillati</taxon>
        <taxon>Bacillota</taxon>
        <taxon>Bacilli</taxon>
        <taxon>Lactobacillales</taxon>
        <taxon>Lactobacillaceae</taxon>
        <taxon>Limosilactobacillus</taxon>
    </lineage>
</organism>
<name>RS10_LIMRD</name>
<gene>
    <name evidence="1" type="primary">rpsJ</name>
    <name type="ordered locus">Lreu_1484</name>
</gene>
<protein>
    <recommendedName>
        <fullName evidence="1">Small ribosomal subunit protein uS10</fullName>
    </recommendedName>
    <alternativeName>
        <fullName evidence="2">30S ribosomal protein S10</fullName>
    </alternativeName>
</protein>
<accession>A5VLK6</accession>
<feature type="chain" id="PRO_1000060859" description="Small ribosomal subunit protein uS10">
    <location>
        <begin position="1"/>
        <end position="102"/>
    </location>
</feature>